<protein>
    <recommendedName>
        <fullName evidence="1">Small ribosomal subunit protein bS20</fullName>
    </recommendedName>
    <alternativeName>
        <fullName evidence="3">30S ribosomal protein S20</fullName>
    </alternativeName>
</protein>
<feature type="chain" id="PRO_1000126482" description="Small ribosomal subunit protein bS20">
    <location>
        <begin position="1"/>
        <end position="87"/>
    </location>
</feature>
<feature type="region of interest" description="Disordered" evidence="2">
    <location>
        <begin position="1"/>
        <end position="28"/>
    </location>
</feature>
<sequence>MANIKSQQKRNRTNERARLRNKSVKSSLRTAVRSFRDAAHSGDKEKAAELLVSTNRKLDKAASKGVIHKNQAANKKSALARALNKLG</sequence>
<accession>B2HMC9</accession>
<dbReference type="EMBL" id="CP000854">
    <property type="protein sequence ID" value="ACC42149.1"/>
    <property type="molecule type" value="Genomic_DNA"/>
</dbReference>
<dbReference type="RefSeq" id="WP_011741410.1">
    <property type="nucleotide sequence ID" value="NC_010612.1"/>
</dbReference>
<dbReference type="SMR" id="B2HMC9"/>
<dbReference type="STRING" id="216594.MMAR_3733"/>
<dbReference type="GeneID" id="34341862"/>
<dbReference type="GeneID" id="93438078"/>
<dbReference type="KEGG" id="mmi:MMAR_3733"/>
<dbReference type="eggNOG" id="COG0268">
    <property type="taxonomic scope" value="Bacteria"/>
</dbReference>
<dbReference type="HOGENOM" id="CLU_160655_0_1_11"/>
<dbReference type="OrthoDB" id="9807974at2"/>
<dbReference type="Proteomes" id="UP000001190">
    <property type="component" value="Chromosome"/>
</dbReference>
<dbReference type="GO" id="GO:0005829">
    <property type="term" value="C:cytosol"/>
    <property type="evidence" value="ECO:0007669"/>
    <property type="project" value="TreeGrafter"/>
</dbReference>
<dbReference type="GO" id="GO:0015935">
    <property type="term" value="C:small ribosomal subunit"/>
    <property type="evidence" value="ECO:0007669"/>
    <property type="project" value="TreeGrafter"/>
</dbReference>
<dbReference type="GO" id="GO:0070181">
    <property type="term" value="F:small ribosomal subunit rRNA binding"/>
    <property type="evidence" value="ECO:0007669"/>
    <property type="project" value="TreeGrafter"/>
</dbReference>
<dbReference type="GO" id="GO:0003735">
    <property type="term" value="F:structural constituent of ribosome"/>
    <property type="evidence" value="ECO:0007669"/>
    <property type="project" value="InterPro"/>
</dbReference>
<dbReference type="GO" id="GO:0006412">
    <property type="term" value="P:translation"/>
    <property type="evidence" value="ECO:0007669"/>
    <property type="project" value="UniProtKB-UniRule"/>
</dbReference>
<dbReference type="FunFam" id="1.20.58.110:FF:000001">
    <property type="entry name" value="30S ribosomal protein S20"/>
    <property type="match status" value="1"/>
</dbReference>
<dbReference type="Gene3D" id="1.20.58.110">
    <property type="entry name" value="Ribosomal protein S20"/>
    <property type="match status" value="1"/>
</dbReference>
<dbReference type="HAMAP" id="MF_00500">
    <property type="entry name" value="Ribosomal_bS20"/>
    <property type="match status" value="1"/>
</dbReference>
<dbReference type="InterPro" id="IPR002583">
    <property type="entry name" value="Ribosomal_bS20"/>
</dbReference>
<dbReference type="InterPro" id="IPR036510">
    <property type="entry name" value="Ribosomal_bS20_sf"/>
</dbReference>
<dbReference type="NCBIfam" id="TIGR00029">
    <property type="entry name" value="S20"/>
    <property type="match status" value="1"/>
</dbReference>
<dbReference type="PANTHER" id="PTHR33398">
    <property type="entry name" value="30S RIBOSOMAL PROTEIN S20"/>
    <property type="match status" value="1"/>
</dbReference>
<dbReference type="PANTHER" id="PTHR33398:SF1">
    <property type="entry name" value="SMALL RIBOSOMAL SUBUNIT PROTEIN BS20C"/>
    <property type="match status" value="1"/>
</dbReference>
<dbReference type="Pfam" id="PF01649">
    <property type="entry name" value="Ribosomal_S20p"/>
    <property type="match status" value="1"/>
</dbReference>
<dbReference type="SUPFAM" id="SSF46992">
    <property type="entry name" value="Ribosomal protein S20"/>
    <property type="match status" value="1"/>
</dbReference>
<keyword id="KW-1185">Reference proteome</keyword>
<keyword id="KW-0687">Ribonucleoprotein</keyword>
<keyword id="KW-0689">Ribosomal protein</keyword>
<keyword id="KW-0694">RNA-binding</keyword>
<keyword id="KW-0699">rRNA-binding</keyword>
<reference key="1">
    <citation type="journal article" date="2008" name="Genome Res.">
        <title>Insights from the complete genome sequence of Mycobacterium marinum on the evolution of Mycobacterium tuberculosis.</title>
        <authorList>
            <person name="Stinear T.P."/>
            <person name="Seemann T."/>
            <person name="Harrison P.F."/>
            <person name="Jenkin G.A."/>
            <person name="Davies J.K."/>
            <person name="Johnson P.D."/>
            <person name="Abdellah Z."/>
            <person name="Arrowsmith C."/>
            <person name="Chillingworth T."/>
            <person name="Churcher C."/>
            <person name="Clarke K."/>
            <person name="Cronin A."/>
            <person name="Davis P."/>
            <person name="Goodhead I."/>
            <person name="Holroyd N."/>
            <person name="Jagels K."/>
            <person name="Lord A."/>
            <person name="Moule S."/>
            <person name="Mungall K."/>
            <person name="Norbertczak H."/>
            <person name="Quail M.A."/>
            <person name="Rabbinowitsch E."/>
            <person name="Walker D."/>
            <person name="White B."/>
            <person name="Whitehead S."/>
            <person name="Small P.L."/>
            <person name="Brosch R."/>
            <person name="Ramakrishnan L."/>
            <person name="Fischbach M.A."/>
            <person name="Parkhill J."/>
            <person name="Cole S.T."/>
        </authorList>
    </citation>
    <scope>NUCLEOTIDE SEQUENCE [LARGE SCALE GENOMIC DNA]</scope>
    <source>
        <strain>ATCC BAA-535 / M</strain>
    </source>
</reference>
<name>RS20_MYCMM</name>
<gene>
    <name evidence="1" type="primary">rpsT</name>
    <name type="ordered locus">MMAR_3733</name>
</gene>
<comment type="function">
    <text evidence="1">Binds directly to 16S ribosomal RNA.</text>
</comment>
<comment type="similarity">
    <text evidence="1">Belongs to the bacterial ribosomal protein bS20 family.</text>
</comment>
<evidence type="ECO:0000255" key="1">
    <source>
        <dbReference type="HAMAP-Rule" id="MF_00500"/>
    </source>
</evidence>
<evidence type="ECO:0000256" key="2">
    <source>
        <dbReference type="SAM" id="MobiDB-lite"/>
    </source>
</evidence>
<evidence type="ECO:0000305" key="3"/>
<proteinExistence type="inferred from homology"/>
<organism>
    <name type="scientific">Mycobacterium marinum (strain ATCC BAA-535 / M)</name>
    <dbReference type="NCBI Taxonomy" id="216594"/>
    <lineage>
        <taxon>Bacteria</taxon>
        <taxon>Bacillati</taxon>
        <taxon>Actinomycetota</taxon>
        <taxon>Actinomycetes</taxon>
        <taxon>Mycobacteriales</taxon>
        <taxon>Mycobacteriaceae</taxon>
        <taxon>Mycobacterium</taxon>
        <taxon>Mycobacterium ulcerans group</taxon>
    </lineage>
</organism>